<organism>
    <name type="scientific">Oryctolagus cuniculus</name>
    <name type="common">Rabbit</name>
    <dbReference type="NCBI Taxonomy" id="9986"/>
    <lineage>
        <taxon>Eukaryota</taxon>
        <taxon>Metazoa</taxon>
        <taxon>Chordata</taxon>
        <taxon>Craniata</taxon>
        <taxon>Vertebrata</taxon>
        <taxon>Euteleostomi</taxon>
        <taxon>Mammalia</taxon>
        <taxon>Eutheria</taxon>
        <taxon>Euarchontoglires</taxon>
        <taxon>Glires</taxon>
        <taxon>Lagomorpha</taxon>
        <taxon>Leporidae</taxon>
        <taxon>Oryctolagus</taxon>
    </lineage>
</organism>
<comment type="function">
    <text>IRBP shuttles 11-cis and all trans retinoids between the retinol isomerase in the pigment epithelium and the visual pigments in the photoreceptor cells of the retina.</text>
</comment>
<comment type="subcellular location">
    <subcellularLocation>
        <location>Secreted</location>
        <location>Extracellular space</location>
        <location>Extracellular matrix</location>
        <location>Interphotoreceptor matrix</location>
    </subcellularLocation>
    <text>Interphotoreceptor matrix that permeates the space between the retina and the contiguous layer of pigment epithelium cells.</text>
</comment>
<accession>P12664</accession>
<proteinExistence type="evidence at protein level"/>
<reference key="1">
    <citation type="journal article" date="1986" name="FEBS Lett.">
        <title>N-terminal sequence homologies in interstitial retinol-binding proteins from 10 vertebrate species.</title>
        <authorList>
            <person name="Fong S.-L."/>
            <person name="Cook R.G."/>
            <person name="Alvarez R.A."/>
            <person name="Liou G.I."/>
            <person name="Landers R.A."/>
            <person name="Bridges C.D.B."/>
        </authorList>
    </citation>
    <scope>PROTEIN SEQUENCE</scope>
</reference>
<sequence>SHLFQPSLVLDMAKVLLDNYXFP</sequence>
<feature type="chain" id="PRO_0000084231" description="Retinol-binding protein 3">
    <location>
        <begin position="1"/>
        <end position="23" status="greater than"/>
    </location>
</feature>
<feature type="non-terminal residue">
    <location>
        <position position="23"/>
    </location>
</feature>
<gene>
    <name type="primary">RBP3</name>
</gene>
<keyword id="KW-0903">Direct protein sequencing</keyword>
<keyword id="KW-0272">Extracellular matrix</keyword>
<keyword id="KW-1185">Reference proteome</keyword>
<keyword id="KW-0964">Secreted</keyword>
<keyword id="KW-0813">Transport</keyword>
<keyword id="KW-0845">Vitamin A</keyword>
<name>RET3_RABIT</name>
<protein>
    <recommendedName>
        <fullName>Retinol-binding protein 3</fullName>
    </recommendedName>
    <alternativeName>
        <fullName>Interphotoreceptor retinoid-binding protein</fullName>
        <shortName>IRBP</shortName>
    </alternativeName>
    <alternativeName>
        <fullName>Interstitial retinol-binding protein</fullName>
    </alternativeName>
</protein>
<dbReference type="PIR" id="C24417">
    <property type="entry name" value="C24417"/>
</dbReference>
<dbReference type="STRING" id="9986.ENSOCUP00000011711"/>
<dbReference type="PaxDb" id="9986-ENSOCUP00000011711"/>
<dbReference type="eggNOG" id="ENOG502QW81">
    <property type="taxonomic scope" value="Eukaryota"/>
</dbReference>
<dbReference type="InParanoid" id="P12664"/>
<dbReference type="Proteomes" id="UP000001811">
    <property type="component" value="Unplaced"/>
</dbReference>
<dbReference type="GO" id="GO:0005576">
    <property type="term" value="C:extracellular region"/>
    <property type="evidence" value="ECO:0007669"/>
    <property type="project" value="UniProtKB-KW"/>
</dbReference>
<dbReference type="GO" id="GO:0033165">
    <property type="term" value="C:interphotoreceptor matrix"/>
    <property type="evidence" value="ECO:0007669"/>
    <property type="project" value="UniProtKB-SubCell"/>
</dbReference>
<dbReference type="GO" id="GO:0016918">
    <property type="term" value="F:retinal binding"/>
    <property type="evidence" value="ECO:0007669"/>
    <property type="project" value="UniProtKB-KW"/>
</dbReference>